<accession>A1U1Q2</accession>
<reference key="1">
    <citation type="journal article" date="2011" name="Appl. Environ. Microbiol.">
        <title>Genomic potential of Marinobacter aquaeolei, a biogeochemical 'opportunitroph'.</title>
        <authorList>
            <person name="Singer E."/>
            <person name="Webb E.A."/>
            <person name="Nelson W.C."/>
            <person name="Heidelberg J.F."/>
            <person name="Ivanova N."/>
            <person name="Pati A."/>
            <person name="Edwards K.J."/>
        </authorList>
    </citation>
    <scope>NUCLEOTIDE SEQUENCE [LARGE SCALE GENOMIC DNA]</scope>
    <source>
        <strain>ATCC 700491 / DSM 11845 / VT8</strain>
    </source>
</reference>
<organism>
    <name type="scientific">Marinobacter nauticus (strain ATCC 700491 / DSM 11845 / VT8)</name>
    <name type="common">Marinobacter aquaeolei</name>
    <dbReference type="NCBI Taxonomy" id="351348"/>
    <lineage>
        <taxon>Bacteria</taxon>
        <taxon>Pseudomonadati</taxon>
        <taxon>Pseudomonadota</taxon>
        <taxon>Gammaproteobacteria</taxon>
        <taxon>Pseudomonadales</taxon>
        <taxon>Marinobacteraceae</taxon>
        <taxon>Marinobacter</taxon>
    </lineage>
</organism>
<feature type="chain" id="PRO_1000024581" description="ATP-dependent Clp protease ATP-binding subunit ClpX">
    <location>
        <begin position="1"/>
        <end position="427"/>
    </location>
</feature>
<feature type="domain" description="ClpX-type ZB" evidence="2">
    <location>
        <begin position="6"/>
        <end position="59"/>
    </location>
</feature>
<feature type="binding site" evidence="2">
    <location>
        <position position="18"/>
    </location>
    <ligand>
        <name>Zn(2+)</name>
        <dbReference type="ChEBI" id="CHEBI:29105"/>
    </ligand>
</feature>
<feature type="binding site" evidence="2">
    <location>
        <position position="21"/>
    </location>
    <ligand>
        <name>Zn(2+)</name>
        <dbReference type="ChEBI" id="CHEBI:29105"/>
    </ligand>
</feature>
<feature type="binding site" evidence="2">
    <location>
        <position position="40"/>
    </location>
    <ligand>
        <name>Zn(2+)</name>
        <dbReference type="ChEBI" id="CHEBI:29105"/>
    </ligand>
</feature>
<feature type="binding site" evidence="2">
    <location>
        <position position="43"/>
    </location>
    <ligand>
        <name>Zn(2+)</name>
        <dbReference type="ChEBI" id="CHEBI:29105"/>
    </ligand>
</feature>
<feature type="binding site" evidence="1">
    <location>
        <begin position="123"/>
        <end position="130"/>
    </location>
    <ligand>
        <name>ATP</name>
        <dbReference type="ChEBI" id="CHEBI:30616"/>
    </ligand>
</feature>
<name>CLPX_MARN8</name>
<evidence type="ECO:0000255" key="1">
    <source>
        <dbReference type="HAMAP-Rule" id="MF_00175"/>
    </source>
</evidence>
<evidence type="ECO:0000255" key="2">
    <source>
        <dbReference type="PROSITE-ProRule" id="PRU01250"/>
    </source>
</evidence>
<sequence length="427" mass="47144">MADERNGRGDDNGKLLYCSFCGKSQHEVRKLIAGPSVFICDECVDLCNDIIREEIQENAPEEASDRLPTPAEIRETLNEYVIGQDRAKVVLSVAVYNHYKRLRYGEGKSDVELGKSNILLIGPTGSGKTLLAETLARMLNVPFTIADATTLTEAGYVGEDVENIIQKLLQKCDYDVEKAQRGIVYIDEIDKISRKSDNPSITRDVSGEGVQQALLKLIEGTVASVPPQGGRKHPQQEFLQVDTGNILFICGGAFAGLDKVIQERSERSSIGFSATVKSQDDSKSTGDIIREVETEDLVKFGLIPEFVGRLPVVATLTELDEEALVQILTEPKNALTKQYQKLFDMEGVELDFREDALRAVARKAMERKTGARGLRSIMEATLLDTMYQIPSEHDVSKVVIDESVIKGDSEPFKIYASSDHAKAVPED</sequence>
<gene>
    <name evidence="1" type="primary">clpX</name>
    <name type="ordered locus">Maqu_1839</name>
</gene>
<proteinExistence type="inferred from homology"/>
<dbReference type="EMBL" id="CP000514">
    <property type="protein sequence ID" value="ABM18921.1"/>
    <property type="molecule type" value="Genomic_DNA"/>
</dbReference>
<dbReference type="RefSeq" id="WP_011785317.1">
    <property type="nucleotide sequence ID" value="NC_008740.1"/>
</dbReference>
<dbReference type="SMR" id="A1U1Q2"/>
<dbReference type="STRING" id="351348.Maqu_1839"/>
<dbReference type="GeneID" id="31820934"/>
<dbReference type="KEGG" id="maq:Maqu_1839"/>
<dbReference type="eggNOG" id="COG1219">
    <property type="taxonomic scope" value="Bacteria"/>
</dbReference>
<dbReference type="HOGENOM" id="CLU_014218_8_2_6"/>
<dbReference type="OrthoDB" id="9804062at2"/>
<dbReference type="Proteomes" id="UP000000998">
    <property type="component" value="Chromosome"/>
</dbReference>
<dbReference type="GO" id="GO:0009376">
    <property type="term" value="C:HslUV protease complex"/>
    <property type="evidence" value="ECO:0007669"/>
    <property type="project" value="TreeGrafter"/>
</dbReference>
<dbReference type="GO" id="GO:0005524">
    <property type="term" value="F:ATP binding"/>
    <property type="evidence" value="ECO:0007669"/>
    <property type="project" value="UniProtKB-UniRule"/>
</dbReference>
<dbReference type="GO" id="GO:0016887">
    <property type="term" value="F:ATP hydrolysis activity"/>
    <property type="evidence" value="ECO:0007669"/>
    <property type="project" value="InterPro"/>
</dbReference>
<dbReference type="GO" id="GO:0140662">
    <property type="term" value="F:ATP-dependent protein folding chaperone"/>
    <property type="evidence" value="ECO:0007669"/>
    <property type="project" value="InterPro"/>
</dbReference>
<dbReference type="GO" id="GO:0046983">
    <property type="term" value="F:protein dimerization activity"/>
    <property type="evidence" value="ECO:0007669"/>
    <property type="project" value="InterPro"/>
</dbReference>
<dbReference type="GO" id="GO:0051082">
    <property type="term" value="F:unfolded protein binding"/>
    <property type="evidence" value="ECO:0007669"/>
    <property type="project" value="UniProtKB-UniRule"/>
</dbReference>
<dbReference type="GO" id="GO:0008270">
    <property type="term" value="F:zinc ion binding"/>
    <property type="evidence" value="ECO:0007669"/>
    <property type="project" value="InterPro"/>
</dbReference>
<dbReference type="GO" id="GO:0051301">
    <property type="term" value="P:cell division"/>
    <property type="evidence" value="ECO:0007669"/>
    <property type="project" value="TreeGrafter"/>
</dbReference>
<dbReference type="GO" id="GO:0051603">
    <property type="term" value="P:proteolysis involved in protein catabolic process"/>
    <property type="evidence" value="ECO:0007669"/>
    <property type="project" value="TreeGrafter"/>
</dbReference>
<dbReference type="CDD" id="cd19497">
    <property type="entry name" value="RecA-like_ClpX"/>
    <property type="match status" value="1"/>
</dbReference>
<dbReference type="FunFam" id="1.10.8.60:FF:000002">
    <property type="entry name" value="ATP-dependent Clp protease ATP-binding subunit ClpX"/>
    <property type="match status" value="1"/>
</dbReference>
<dbReference type="FunFam" id="3.40.50.300:FF:000005">
    <property type="entry name" value="ATP-dependent Clp protease ATP-binding subunit ClpX"/>
    <property type="match status" value="1"/>
</dbReference>
<dbReference type="Gene3D" id="1.10.8.60">
    <property type="match status" value="1"/>
</dbReference>
<dbReference type="Gene3D" id="6.20.220.10">
    <property type="entry name" value="ClpX chaperone, C4-type zinc finger domain"/>
    <property type="match status" value="1"/>
</dbReference>
<dbReference type="Gene3D" id="3.40.50.300">
    <property type="entry name" value="P-loop containing nucleotide triphosphate hydrolases"/>
    <property type="match status" value="1"/>
</dbReference>
<dbReference type="HAMAP" id="MF_00175">
    <property type="entry name" value="ClpX"/>
    <property type="match status" value="1"/>
</dbReference>
<dbReference type="InterPro" id="IPR003593">
    <property type="entry name" value="AAA+_ATPase"/>
</dbReference>
<dbReference type="InterPro" id="IPR050052">
    <property type="entry name" value="ATP-dep_Clp_protease_ClpX"/>
</dbReference>
<dbReference type="InterPro" id="IPR003959">
    <property type="entry name" value="ATPase_AAA_core"/>
</dbReference>
<dbReference type="InterPro" id="IPR019489">
    <property type="entry name" value="Clp_ATPase_C"/>
</dbReference>
<dbReference type="InterPro" id="IPR004487">
    <property type="entry name" value="Clp_protease_ATP-bd_su_ClpX"/>
</dbReference>
<dbReference type="InterPro" id="IPR046425">
    <property type="entry name" value="ClpX_bact"/>
</dbReference>
<dbReference type="InterPro" id="IPR027417">
    <property type="entry name" value="P-loop_NTPase"/>
</dbReference>
<dbReference type="InterPro" id="IPR010603">
    <property type="entry name" value="Znf_CppX_C4"/>
</dbReference>
<dbReference type="InterPro" id="IPR038366">
    <property type="entry name" value="Znf_CppX_C4_sf"/>
</dbReference>
<dbReference type="NCBIfam" id="TIGR00382">
    <property type="entry name" value="clpX"/>
    <property type="match status" value="1"/>
</dbReference>
<dbReference type="NCBIfam" id="NF003745">
    <property type="entry name" value="PRK05342.1"/>
    <property type="match status" value="1"/>
</dbReference>
<dbReference type="PANTHER" id="PTHR48102:SF7">
    <property type="entry name" value="ATP-DEPENDENT CLP PROTEASE ATP-BINDING SUBUNIT CLPX-LIKE, MITOCHONDRIAL"/>
    <property type="match status" value="1"/>
</dbReference>
<dbReference type="PANTHER" id="PTHR48102">
    <property type="entry name" value="ATP-DEPENDENT CLP PROTEASE ATP-BINDING SUBUNIT CLPX-LIKE, MITOCHONDRIAL-RELATED"/>
    <property type="match status" value="1"/>
</dbReference>
<dbReference type="Pfam" id="PF07724">
    <property type="entry name" value="AAA_2"/>
    <property type="match status" value="1"/>
</dbReference>
<dbReference type="Pfam" id="PF10431">
    <property type="entry name" value="ClpB_D2-small"/>
    <property type="match status" value="1"/>
</dbReference>
<dbReference type="Pfam" id="PF06689">
    <property type="entry name" value="zf-C4_ClpX"/>
    <property type="match status" value="1"/>
</dbReference>
<dbReference type="SMART" id="SM00382">
    <property type="entry name" value="AAA"/>
    <property type="match status" value="1"/>
</dbReference>
<dbReference type="SMART" id="SM01086">
    <property type="entry name" value="ClpB_D2-small"/>
    <property type="match status" value="1"/>
</dbReference>
<dbReference type="SMART" id="SM00994">
    <property type="entry name" value="zf-C4_ClpX"/>
    <property type="match status" value="1"/>
</dbReference>
<dbReference type="SUPFAM" id="SSF57716">
    <property type="entry name" value="Glucocorticoid receptor-like (DNA-binding domain)"/>
    <property type="match status" value="1"/>
</dbReference>
<dbReference type="SUPFAM" id="SSF52540">
    <property type="entry name" value="P-loop containing nucleoside triphosphate hydrolases"/>
    <property type="match status" value="1"/>
</dbReference>
<dbReference type="PROSITE" id="PS51902">
    <property type="entry name" value="CLPX_ZB"/>
    <property type="match status" value="1"/>
</dbReference>
<protein>
    <recommendedName>
        <fullName evidence="1">ATP-dependent Clp protease ATP-binding subunit ClpX</fullName>
    </recommendedName>
</protein>
<keyword id="KW-0067">ATP-binding</keyword>
<keyword id="KW-0143">Chaperone</keyword>
<keyword id="KW-0479">Metal-binding</keyword>
<keyword id="KW-0547">Nucleotide-binding</keyword>
<keyword id="KW-0862">Zinc</keyword>
<comment type="function">
    <text evidence="1">ATP-dependent specificity component of the Clp protease. It directs the protease to specific substrates. Can perform chaperone functions in the absence of ClpP.</text>
</comment>
<comment type="subunit">
    <text evidence="1">Component of the ClpX-ClpP complex. Forms a hexameric ring that, in the presence of ATP, binds to fourteen ClpP subunits assembled into a disk-like structure with a central cavity, resembling the structure of eukaryotic proteasomes.</text>
</comment>
<comment type="similarity">
    <text evidence="1">Belongs to the ClpX chaperone family.</text>
</comment>